<feature type="chain" id="PRO_0000153125" description="Nitrogenase iron-molybdenum cofactor biosynthesis protein NifN">
    <location>
        <begin position="1"/>
        <end position="444"/>
    </location>
</feature>
<comment type="function">
    <text>This protein may play a role in the biosynthesis of the prosthetic group of nitrogenase (FeMo cofactor).</text>
</comment>
<comment type="pathway">
    <text>Cofactor biosynthesis; Fe-Mo cofactor biosynthesis.</text>
</comment>
<comment type="similarity">
    <text evidence="1">Belongs to the NifD/NifK/NifE/NifN family.</text>
</comment>
<organism>
    <name type="scientific">Nostoc sp. (strain PCC 7120 / SAG 25.82 / UTEX 2576)</name>
    <dbReference type="NCBI Taxonomy" id="103690"/>
    <lineage>
        <taxon>Bacteria</taxon>
        <taxon>Bacillati</taxon>
        <taxon>Cyanobacteriota</taxon>
        <taxon>Cyanophyceae</taxon>
        <taxon>Nostocales</taxon>
        <taxon>Nostocaceae</taxon>
        <taxon>Nostoc</taxon>
    </lineage>
</organism>
<sequence length="444" mass="48332">MAIVTLPNKSVAVNPLKQSQALGASLAFLGLKGMIPLFHGSQGCTAFAKVVLVRHFREAIPLATTAMTEVTTILGGEDNIEQAILTLVEKSSPEIIGLCSTGLTETRGDDIERFLKDIRDRHPEISHLPIVFAPTPDFKGALQDGFAAAVESIVQEIPQPGTTRSEQVTILAGSAFTPGDLQEIKEIVTAFGLVPIFVPDIGASLDGHLDEEYSSVTTSGTTVKQLQEVGCSAFTIALGESMRGAARILEDRFNIPYEVFSELTGLEPVDEFIQALAILSSNSVPEKYCRQRRQLQDAMLDTHFYFGAKRISLALEPDLLWSMVKFLQSMGTQIHAAVTTTRSPLLEQLPIKSVTIGDLEDFEQLAVESDLLIGNSNLAAIAKRLSIPHYRLGIPIYDRLGNGHYTKVGYRGSMEVLFGIGNLFIDAEEARVKNFDENFVTGHG</sequence>
<keyword id="KW-0535">Nitrogen fixation</keyword>
<keyword id="KW-1185">Reference proteome</keyword>
<name>NIFN_NOSS1</name>
<accession>Q44145</accession>
<protein>
    <recommendedName>
        <fullName>Nitrogenase iron-molybdenum cofactor biosynthesis protein NifN</fullName>
    </recommendedName>
</protein>
<evidence type="ECO:0000305" key="1"/>
<proteinExistence type="inferred from homology"/>
<gene>
    <name type="primary">nifN</name>
    <name type="ordered locus">all1437</name>
</gene>
<reference key="1">
    <citation type="submission" date="1996-01" db="EMBL/GenBank/DDBJ databases">
        <authorList>
            <person name="Buikema W.J."/>
            <person name="Scappino L.A."/>
            <person name="Haselkorn R."/>
        </authorList>
    </citation>
    <scope>NUCLEOTIDE SEQUENCE [GENOMIC DNA]</scope>
</reference>
<reference key="2">
    <citation type="journal article" date="2001" name="DNA Res.">
        <title>Complete genomic sequence of the filamentous nitrogen-fixing cyanobacterium Anabaena sp. strain PCC 7120.</title>
        <authorList>
            <person name="Kaneko T."/>
            <person name="Nakamura Y."/>
            <person name="Wolk C.P."/>
            <person name="Kuritz T."/>
            <person name="Sasamoto S."/>
            <person name="Watanabe A."/>
            <person name="Iriguchi M."/>
            <person name="Ishikawa A."/>
            <person name="Kawashima K."/>
            <person name="Kimura T."/>
            <person name="Kishida Y."/>
            <person name="Kohara M."/>
            <person name="Matsumoto M."/>
            <person name="Matsuno A."/>
            <person name="Muraki A."/>
            <person name="Nakazaki N."/>
            <person name="Shimpo S."/>
            <person name="Sugimoto M."/>
            <person name="Takazawa M."/>
            <person name="Yamada M."/>
            <person name="Yasuda M."/>
            <person name="Tabata S."/>
        </authorList>
    </citation>
    <scope>NUCLEOTIDE SEQUENCE [LARGE SCALE GENOMIC DNA]</scope>
    <source>
        <strain>PCC 7120 / SAG 25.82 / UTEX 2576</strain>
    </source>
</reference>
<dbReference type="EMBL" id="U47055">
    <property type="protein sequence ID" value="AAA87948.1"/>
    <property type="molecule type" value="Genomic_DNA"/>
</dbReference>
<dbReference type="EMBL" id="BA000019">
    <property type="protein sequence ID" value="BAB73394.1"/>
    <property type="molecule type" value="Genomic_DNA"/>
</dbReference>
<dbReference type="PIR" id="AB1986">
    <property type="entry name" value="AB1986"/>
</dbReference>
<dbReference type="RefSeq" id="WP_010995609.1">
    <property type="nucleotide sequence ID" value="NZ_RSCN01000040.1"/>
</dbReference>
<dbReference type="SMR" id="Q44145"/>
<dbReference type="STRING" id="103690.gene:10493452"/>
<dbReference type="KEGG" id="ana:all1437"/>
<dbReference type="eggNOG" id="COG2710">
    <property type="taxonomic scope" value="Bacteria"/>
</dbReference>
<dbReference type="OrthoDB" id="9800746at2"/>
<dbReference type="UniPathway" id="UPA00782"/>
<dbReference type="Proteomes" id="UP000002483">
    <property type="component" value="Chromosome"/>
</dbReference>
<dbReference type="GO" id="GO:0016163">
    <property type="term" value="F:nitrogenase activity"/>
    <property type="evidence" value="ECO:0007669"/>
    <property type="project" value="InterPro"/>
</dbReference>
<dbReference type="GO" id="GO:0009399">
    <property type="term" value="P:nitrogen fixation"/>
    <property type="evidence" value="ECO:0007669"/>
    <property type="project" value="UniProtKB-KW"/>
</dbReference>
<dbReference type="GO" id="GO:0065003">
    <property type="term" value="P:protein-containing complex assembly"/>
    <property type="evidence" value="ECO:0007669"/>
    <property type="project" value="InterPro"/>
</dbReference>
<dbReference type="CDD" id="cd01966">
    <property type="entry name" value="Nitrogenase_NifN_1"/>
    <property type="match status" value="1"/>
</dbReference>
<dbReference type="Gene3D" id="6.10.250.1090">
    <property type="match status" value="1"/>
</dbReference>
<dbReference type="Gene3D" id="3.40.50.1980">
    <property type="entry name" value="Nitrogenase molybdenum iron protein domain"/>
    <property type="match status" value="3"/>
</dbReference>
<dbReference type="InterPro" id="IPR050152">
    <property type="entry name" value="ChlB/BchB/BchZ"/>
</dbReference>
<dbReference type="InterPro" id="IPR000510">
    <property type="entry name" value="Nase/OxRdtase_comp1"/>
</dbReference>
<dbReference type="InterPro" id="IPR000318">
    <property type="entry name" value="Nase_comp1_CS"/>
</dbReference>
<dbReference type="InterPro" id="IPR005975">
    <property type="entry name" value="Nase_Mo-Fe_CF"/>
</dbReference>
<dbReference type="NCBIfam" id="TIGR01285">
    <property type="entry name" value="nifN"/>
    <property type="match status" value="1"/>
</dbReference>
<dbReference type="PANTHER" id="PTHR33712">
    <property type="entry name" value="LIGHT-INDEPENDENT PROTOCHLOROPHYLLIDE REDUCTASE SUBUNIT B"/>
    <property type="match status" value="1"/>
</dbReference>
<dbReference type="PANTHER" id="PTHR33712:SF7">
    <property type="entry name" value="LIGHT-INDEPENDENT PROTOCHLOROPHYLLIDE REDUCTASE SUBUNIT B"/>
    <property type="match status" value="1"/>
</dbReference>
<dbReference type="Pfam" id="PF00148">
    <property type="entry name" value="Oxidored_nitro"/>
    <property type="match status" value="1"/>
</dbReference>
<dbReference type="SUPFAM" id="SSF53807">
    <property type="entry name" value="Helical backbone' metal receptor"/>
    <property type="match status" value="1"/>
</dbReference>
<dbReference type="PROSITE" id="PS00699">
    <property type="entry name" value="NITROGENASE_1_1"/>
    <property type="match status" value="1"/>
</dbReference>